<comment type="function">
    <text evidence="1">Cell surface-associated calcium-binding protein which plays an important role in adhesion and pathogenesis. Mediates interactions with components of the extracellular matrix such as host DSG1 to promote bacterial adhesion to host cells. Contributes to the resistance to killing by innate immune components such as neutrophils present in blood and thus attenuates bacterial clearance.</text>
</comment>
<comment type="subunit">
    <text evidence="1">Interacts with host DSG1; this interaction increases S.aureus adherence to keratinocytes.</text>
</comment>
<comment type="subcellular location">
    <subcellularLocation>
        <location evidence="3">Secreted</location>
        <location evidence="3">Cell wall</location>
        <topology evidence="3">Peptidoglycan-anchor</topology>
    </subcellularLocation>
    <text evidence="1">Anchored to the cell wall by sortase A (By similarity).</text>
</comment>
<comment type="similarity">
    <text evidence="5">Belongs to the serine-aspartate repeat-containing protein (SDr) family.</text>
</comment>
<feature type="signal peptide" evidence="2">
    <location>
        <begin position="1"/>
        <end position="35"/>
    </location>
</feature>
<feature type="chain" id="PRO_0000281202" description="Serine-aspartate repeat-containing protein D">
    <location>
        <begin position="36"/>
        <end position="1347"/>
    </location>
</feature>
<feature type="propeptide" id="PRO_0000281203" description="Removed by sortase" evidence="3">
    <location>
        <begin position="1348"/>
        <end position="1381"/>
    </location>
</feature>
<feature type="domain" description="CNA-B 1">
    <location>
        <begin position="569"/>
        <end position="680"/>
    </location>
</feature>
<feature type="domain" description="CNA-B 2">
    <location>
        <begin position="681"/>
        <end position="791"/>
    </location>
</feature>
<feature type="domain" description="CNA-B 3">
    <location>
        <begin position="792"/>
        <end position="901"/>
    </location>
</feature>
<feature type="domain" description="CNA-B 4">
    <location>
        <begin position="902"/>
        <end position="1012"/>
    </location>
</feature>
<feature type="domain" description="CNA-B 5">
    <location>
        <begin position="1013"/>
        <end position="1123"/>
    </location>
</feature>
<feature type="region of interest" description="Ligand binding A region">
    <location>
        <begin position="36"/>
        <end position="568"/>
    </location>
</feature>
<feature type="region of interest" description="Disordered" evidence="4">
    <location>
        <begin position="54"/>
        <end position="185"/>
    </location>
</feature>
<feature type="region of interest" description="Disordered" evidence="4">
    <location>
        <begin position="857"/>
        <end position="883"/>
    </location>
</feature>
<feature type="region of interest" description="Disordered" evidence="4">
    <location>
        <begin position="972"/>
        <end position="992"/>
    </location>
</feature>
<feature type="region of interest" description="Disordered" evidence="4">
    <location>
        <begin position="1078"/>
        <end position="1357"/>
    </location>
</feature>
<feature type="short sequence motif" description="YSIRK-G/S signaling motif" evidence="1">
    <location>
        <begin position="23"/>
        <end position="34"/>
    </location>
</feature>
<feature type="short sequence motif" description="LPXTG sorting signal" evidence="3">
    <location>
        <begin position="1344"/>
        <end position="1348"/>
    </location>
</feature>
<feature type="compositionally biased region" description="Polar residues" evidence="4">
    <location>
        <begin position="62"/>
        <end position="71"/>
    </location>
</feature>
<feature type="compositionally biased region" description="Polar residues" evidence="4">
    <location>
        <begin position="94"/>
        <end position="108"/>
    </location>
</feature>
<feature type="compositionally biased region" description="Basic and acidic residues" evidence="4">
    <location>
        <begin position="130"/>
        <end position="145"/>
    </location>
</feature>
<feature type="compositionally biased region" description="Polar residues" evidence="4">
    <location>
        <begin position="146"/>
        <end position="155"/>
    </location>
</feature>
<feature type="compositionally biased region" description="Polar residues" evidence="4">
    <location>
        <begin position="163"/>
        <end position="173"/>
    </location>
</feature>
<feature type="compositionally biased region" description="Basic and acidic residues" evidence="4">
    <location>
        <begin position="174"/>
        <end position="183"/>
    </location>
</feature>
<feature type="compositionally biased region" description="Polar residues" evidence="4">
    <location>
        <begin position="860"/>
        <end position="869"/>
    </location>
</feature>
<feature type="compositionally biased region" description="Polar residues" evidence="4">
    <location>
        <begin position="972"/>
        <end position="981"/>
    </location>
</feature>
<feature type="compositionally biased region" description="Acidic residues" evidence="4">
    <location>
        <begin position="1091"/>
        <end position="1101"/>
    </location>
</feature>
<feature type="compositionally biased region" description="Acidic residues" evidence="4">
    <location>
        <begin position="1118"/>
        <end position="1134"/>
    </location>
</feature>
<feature type="compositionally biased region" description="Acidic residues" evidence="4">
    <location>
        <begin position="1142"/>
        <end position="1164"/>
    </location>
</feature>
<feature type="compositionally biased region" description="Acidic residues" evidence="4">
    <location>
        <begin position="1172"/>
        <end position="1320"/>
    </location>
</feature>
<feature type="modified residue" description="Pentaglycyl murein peptidoglycan amidated threonine" evidence="3">
    <location>
        <position position="1347"/>
    </location>
</feature>
<gene>
    <name type="primary">sdrD</name>
    <name type="ordered locus">SAUSA300_0547</name>
</gene>
<keyword id="KW-0106">Calcium</keyword>
<keyword id="KW-0134">Cell wall</keyword>
<keyword id="KW-0572">Peptidoglycan-anchor</keyword>
<keyword id="KW-0677">Repeat</keyword>
<keyword id="KW-0964">Secreted</keyword>
<keyword id="KW-0732">Signal</keyword>
<accession>Q2FJ78</accession>
<sequence>MLNRENKTAITRKGMVSNRLNKFSIRKYTVGTASILVGTTLIFGLGNQEAKAAESTNKELNEATTSASDNQSSDKVDMQQLNQEDNTKNDNQKEMVSSQGNETTSNGNKLIEKESVQSTTGNKVEVSTAKSDEQASPKSTNEDLNTKQTISNQEALQPDLQENKSVVNVQPTNEENKKVDAKTESTTLNVKSDAIKSNDETLVDNNSNSNNENNADIILPKSTAPKRLNTRMRIAAVQPSSTEAKNVNDLITSNTTLTVVDADKNNKIVPAQDYLSLKSQITVDDKVKSGDYFTIKYSDTVQVYGLNPEDIKNIGDIKDPNNGETIATAKHDTANNLITYTFTDYVDRFNSVQMGINYSIYMDADTIPVSKNDVEFNVTIGNTTTKTTANIQYPDYVVNEKNSIGSAFTETVSHVGNKENPGYYKQTIYVNPSENSLTNAKLKVQAYHSSYPNNIGQINKDVTDIKIYQVPKGYTLNKGYDVNTKELTDVTNQYLQKITYGDNNSAVIDFGNADSAYVVMVNTKFQYTNSESPTLVQMATLSSTGNKSVSTGNALGFTNNQSGGAGQEVYKIGNYVWEDTNKNGVQELGEKGVGNVTVTVFDNNTNTKVGEAVTKEDGSYLIPNLPNGDYRVEFSNLPKGYEVTPSKQGNNEELDSNGLSSVITVNGKDNLSADLGIYKPKYNLGDYVWEDTNKNGIQDQDEKGISGVTVTLKDENGNVLKTVTTDADGKYKFTDLDNGNYKVEFTTPEGYTPTTVTSGSDIEKDSNGLTTTGVINGADNMTLDSGFYKTPKYNLGNYVWEDTNKDGKQDSTEKGISGVTVTLKNENGEVLQTTKTDKDGKYQFTGLENGTYKVEFETPSGYTPTQVGSGTDEGIDSNGTSTTGVIKDKDNDTIDSGFYKPTYNLGDYVWEDTNKNGVQDKDEKGISGVTVTLKDENDKVLKTVTTDENGKYQFTDLNNGTYKVEFETPSGYTPTSVTSGNDTEKDSNGLTTTGVIKDADNMTLDSGFYKTPKYSLGDYVWYDSNKDGKQDSTEKGIKDVKVTLLNEKGEVIGTTKTDENGKYCFDNLDSGKYKVIFEKPAGLTQTGTNTTEDDKDADGGEVDVTITDHDDFTLDNGYYEEETSDSDSDSDSDSDSDRDSDSDSDSDSDSDSDSDSDSDSDSDSDSDRDSDSDSDSDSDSDSDSDSDSDSDSDSDSDSDSDSDSDSDSDSDSDSDSDSDSDSDSDSDSDSDSDSDSDSDSDSDSDSDSDSDSDSDSDSDSDSDSDSDSDSDSDSDSDSDSDSDSDSDSDSDSDSDSDSDSDSDSDSDSDSDSDSDSDSDSDAGKHTPVKPMSTTKDHHNKAKALPETGNENSGSNNATLFGGLFAALGSLLLFGRRKKQNK</sequence>
<protein>
    <recommendedName>
        <fullName>Serine-aspartate repeat-containing protein D</fullName>
    </recommendedName>
</protein>
<dbReference type="EMBL" id="CP000255">
    <property type="protein sequence ID" value="ABD20874.1"/>
    <property type="molecule type" value="Genomic_DNA"/>
</dbReference>
<dbReference type="RefSeq" id="WP_000934424.1">
    <property type="nucleotide sequence ID" value="NZ_CP027476.1"/>
</dbReference>
<dbReference type="SMR" id="Q2FJ78"/>
<dbReference type="KEGG" id="saa:SAUSA300_0547"/>
<dbReference type="HOGENOM" id="CLU_004137_0_1_9"/>
<dbReference type="OMA" id="ETESHQG"/>
<dbReference type="PRO" id="PR:Q2FJ78"/>
<dbReference type="Proteomes" id="UP000001939">
    <property type="component" value="Chromosome"/>
</dbReference>
<dbReference type="GO" id="GO:0005576">
    <property type="term" value="C:extracellular region"/>
    <property type="evidence" value="ECO:0007669"/>
    <property type="project" value="UniProtKB-KW"/>
</dbReference>
<dbReference type="GO" id="GO:0007155">
    <property type="term" value="P:cell adhesion"/>
    <property type="evidence" value="ECO:0007669"/>
    <property type="project" value="InterPro"/>
</dbReference>
<dbReference type="Gene3D" id="2.60.40.1280">
    <property type="match status" value="1"/>
</dbReference>
<dbReference type="Gene3D" id="2.60.40.1290">
    <property type="match status" value="1"/>
</dbReference>
<dbReference type="Gene3D" id="2.60.40.10">
    <property type="entry name" value="Immunoglobulins"/>
    <property type="match status" value="5"/>
</dbReference>
<dbReference type="InterPro" id="IPR011266">
    <property type="entry name" value="Adhesin_Fg-bd_dom_2"/>
</dbReference>
<dbReference type="InterPro" id="IPR008966">
    <property type="entry name" value="Adhesion_dom_sf"/>
</dbReference>
<dbReference type="InterPro" id="IPR011252">
    <property type="entry name" value="Fibrogen-bd_dom1"/>
</dbReference>
<dbReference type="InterPro" id="IPR013783">
    <property type="entry name" value="Ig-like_fold"/>
</dbReference>
<dbReference type="InterPro" id="IPR019931">
    <property type="entry name" value="LPXTG_anchor"/>
</dbReference>
<dbReference type="InterPro" id="IPR033764">
    <property type="entry name" value="Sdr_B"/>
</dbReference>
<dbReference type="InterPro" id="IPR041171">
    <property type="entry name" value="SDR_Ig"/>
</dbReference>
<dbReference type="InterPro" id="IPR005877">
    <property type="entry name" value="YSIRK_signal_dom"/>
</dbReference>
<dbReference type="NCBIfam" id="TIGR01167">
    <property type="entry name" value="LPXTG_anchor"/>
    <property type="match status" value="1"/>
</dbReference>
<dbReference type="NCBIfam" id="NF012181">
    <property type="entry name" value="MSCRAMM_SdrD"/>
    <property type="match status" value="1"/>
</dbReference>
<dbReference type="NCBIfam" id="TIGR01168">
    <property type="entry name" value="YSIRK_signal"/>
    <property type="match status" value="1"/>
</dbReference>
<dbReference type="PANTHER" id="PTHR36108">
    <property type="entry name" value="COLOSSIN-B-RELATED"/>
    <property type="match status" value="1"/>
</dbReference>
<dbReference type="PANTHER" id="PTHR36108:SF13">
    <property type="entry name" value="COLOSSIN-B-RELATED"/>
    <property type="match status" value="1"/>
</dbReference>
<dbReference type="Pfam" id="PF17961">
    <property type="entry name" value="Big_8"/>
    <property type="match status" value="1"/>
</dbReference>
<dbReference type="Pfam" id="PF00746">
    <property type="entry name" value="Gram_pos_anchor"/>
    <property type="match status" value="1"/>
</dbReference>
<dbReference type="Pfam" id="PF17210">
    <property type="entry name" value="SdrD_B"/>
    <property type="match status" value="5"/>
</dbReference>
<dbReference type="Pfam" id="PF10425">
    <property type="entry name" value="SdrG_C_C"/>
    <property type="match status" value="1"/>
</dbReference>
<dbReference type="Pfam" id="PF04650">
    <property type="entry name" value="YSIRK_signal"/>
    <property type="match status" value="1"/>
</dbReference>
<dbReference type="SUPFAM" id="SSF49401">
    <property type="entry name" value="Bacterial adhesins"/>
    <property type="match status" value="2"/>
</dbReference>
<dbReference type="SUPFAM" id="SSF117074">
    <property type="entry name" value="Hypothetical protein PA1324"/>
    <property type="match status" value="5"/>
</dbReference>
<dbReference type="PROSITE" id="PS50847">
    <property type="entry name" value="GRAM_POS_ANCHORING"/>
    <property type="match status" value="1"/>
</dbReference>
<organism>
    <name type="scientific">Staphylococcus aureus (strain USA300)</name>
    <dbReference type="NCBI Taxonomy" id="367830"/>
    <lineage>
        <taxon>Bacteria</taxon>
        <taxon>Bacillati</taxon>
        <taxon>Bacillota</taxon>
        <taxon>Bacilli</taxon>
        <taxon>Bacillales</taxon>
        <taxon>Staphylococcaceae</taxon>
        <taxon>Staphylococcus</taxon>
    </lineage>
</organism>
<evidence type="ECO:0000250" key="1">
    <source>
        <dbReference type="UniProtKB" id="Q2G0L4"/>
    </source>
</evidence>
<evidence type="ECO:0000255" key="2"/>
<evidence type="ECO:0000255" key="3">
    <source>
        <dbReference type="PROSITE-ProRule" id="PRU00477"/>
    </source>
</evidence>
<evidence type="ECO:0000256" key="4">
    <source>
        <dbReference type="SAM" id="MobiDB-lite"/>
    </source>
</evidence>
<evidence type="ECO:0000305" key="5"/>
<reference key="1">
    <citation type="journal article" date="2006" name="Lancet">
        <title>Complete genome sequence of USA300, an epidemic clone of community-acquired meticillin-resistant Staphylococcus aureus.</title>
        <authorList>
            <person name="Diep B.A."/>
            <person name="Gill S.R."/>
            <person name="Chang R.F."/>
            <person name="Phan T.H."/>
            <person name="Chen J.H."/>
            <person name="Davidson M.G."/>
            <person name="Lin F."/>
            <person name="Lin J."/>
            <person name="Carleton H.A."/>
            <person name="Mongodin E.F."/>
            <person name="Sensabaugh G.F."/>
            <person name="Perdreau-Remington F."/>
        </authorList>
    </citation>
    <scope>NUCLEOTIDE SEQUENCE [LARGE SCALE GENOMIC DNA]</scope>
    <source>
        <strain>USA300</strain>
    </source>
</reference>
<proteinExistence type="inferred from homology"/>
<name>SDRD_STAA3</name>